<sequence>MSQSGKNGLTYSDAGVDIDNGNLLVEKIKPAVRSTRRPGADGEIGGFGGLFDLKAAGFTDPVLVAANDGVGTKLKIAIDADYHDTVGIDLVAMCVNDLVVQGAEPLFFLDYFATGKLVPDQGAAIVGGIAAGCREAGCALIGGETAEMPGMYSSGDYDLAGFAVGAAERGKLLPSGDIAEGDVILGLASSGVHSNGFSLVRKIVELSGLGWDAPAPFAEGKKLGEALLEPTRIYVKPLLKAIRETGALKALAHITGGGFPENIPRVLPEHLAAEIDLGAVKVPPVFSWLARTGGVEAKEMLRTFNCGIGMIVVVAEENVAAVSKALEAEGEKVVTLGRMIARAEGAAGTVYKGTLAI</sequence>
<evidence type="ECO:0000255" key="1">
    <source>
        <dbReference type="HAMAP-Rule" id="MF_00741"/>
    </source>
</evidence>
<comment type="catalytic activity">
    <reaction evidence="1">
        <text>2-formamido-N(1)-(5-O-phospho-beta-D-ribosyl)acetamidine + ATP = 5-amino-1-(5-phospho-beta-D-ribosyl)imidazole + ADP + phosphate + H(+)</text>
        <dbReference type="Rhea" id="RHEA:23032"/>
        <dbReference type="ChEBI" id="CHEBI:15378"/>
        <dbReference type="ChEBI" id="CHEBI:30616"/>
        <dbReference type="ChEBI" id="CHEBI:43474"/>
        <dbReference type="ChEBI" id="CHEBI:137981"/>
        <dbReference type="ChEBI" id="CHEBI:147287"/>
        <dbReference type="ChEBI" id="CHEBI:456216"/>
        <dbReference type="EC" id="6.3.3.1"/>
    </reaction>
</comment>
<comment type="pathway">
    <text evidence="1">Purine metabolism; IMP biosynthesis via de novo pathway; 5-amino-1-(5-phospho-D-ribosyl)imidazole from N(2)-formyl-N(1)-(5-phospho-D-ribosyl)glycinamide: step 2/2.</text>
</comment>
<comment type="subcellular location">
    <subcellularLocation>
        <location evidence="1">Cytoplasm</location>
    </subcellularLocation>
</comment>
<comment type="similarity">
    <text evidence="1">Belongs to the AIR synthase family.</text>
</comment>
<organism>
    <name type="scientific">Rhizobium etli (strain ATCC 51251 / DSM 11541 / JCM 21823 / NBRC 15573 / CFN 42)</name>
    <dbReference type="NCBI Taxonomy" id="347834"/>
    <lineage>
        <taxon>Bacteria</taxon>
        <taxon>Pseudomonadati</taxon>
        <taxon>Pseudomonadota</taxon>
        <taxon>Alphaproteobacteria</taxon>
        <taxon>Hyphomicrobiales</taxon>
        <taxon>Rhizobiaceae</taxon>
        <taxon>Rhizobium/Agrobacterium group</taxon>
        <taxon>Rhizobium</taxon>
    </lineage>
</organism>
<reference key="1">
    <citation type="journal article" date="2006" name="Proc. Natl. Acad. Sci. U.S.A.">
        <title>The partitioned Rhizobium etli genome: genetic and metabolic redundancy in seven interacting replicons.</title>
        <authorList>
            <person name="Gonzalez V."/>
            <person name="Santamaria R.I."/>
            <person name="Bustos P."/>
            <person name="Hernandez-Gonzalez I."/>
            <person name="Medrano-Soto A."/>
            <person name="Moreno-Hagelsieb G."/>
            <person name="Janga S.C."/>
            <person name="Ramirez M.A."/>
            <person name="Jimenez-Jacinto V."/>
            <person name="Collado-Vides J."/>
            <person name="Davila G."/>
        </authorList>
    </citation>
    <scope>NUCLEOTIDE SEQUENCE [LARGE SCALE GENOMIC DNA]</scope>
    <source>
        <strain>ATCC 51251 / DSM 11541 / JCM 21823 / NBRC 15573 / CFN 42</strain>
    </source>
</reference>
<feature type="chain" id="PRO_0000258391" description="Phosphoribosylformylglycinamidine cyclo-ligase">
    <location>
        <begin position="1"/>
        <end position="357"/>
    </location>
</feature>
<dbReference type="EC" id="6.3.3.1" evidence="1"/>
<dbReference type="EMBL" id="CP000133">
    <property type="protein sequence ID" value="ABC90291.1"/>
    <property type="molecule type" value="Genomic_DNA"/>
</dbReference>
<dbReference type="RefSeq" id="WP_011424821.1">
    <property type="nucleotide sequence ID" value="NC_007761.1"/>
</dbReference>
<dbReference type="SMR" id="Q2KA45"/>
<dbReference type="KEGG" id="ret:RHE_CH01488"/>
<dbReference type="eggNOG" id="COG0150">
    <property type="taxonomic scope" value="Bacteria"/>
</dbReference>
<dbReference type="HOGENOM" id="CLU_047116_0_0_5"/>
<dbReference type="OrthoDB" id="9777881at2"/>
<dbReference type="UniPathway" id="UPA00074">
    <property type="reaction ID" value="UER00129"/>
</dbReference>
<dbReference type="Proteomes" id="UP000001936">
    <property type="component" value="Chromosome"/>
</dbReference>
<dbReference type="GO" id="GO:0005829">
    <property type="term" value="C:cytosol"/>
    <property type="evidence" value="ECO:0007669"/>
    <property type="project" value="TreeGrafter"/>
</dbReference>
<dbReference type="GO" id="GO:0005524">
    <property type="term" value="F:ATP binding"/>
    <property type="evidence" value="ECO:0007669"/>
    <property type="project" value="UniProtKB-KW"/>
</dbReference>
<dbReference type="GO" id="GO:0004637">
    <property type="term" value="F:phosphoribosylamine-glycine ligase activity"/>
    <property type="evidence" value="ECO:0007669"/>
    <property type="project" value="TreeGrafter"/>
</dbReference>
<dbReference type="GO" id="GO:0004641">
    <property type="term" value="F:phosphoribosylformylglycinamidine cyclo-ligase activity"/>
    <property type="evidence" value="ECO:0007669"/>
    <property type="project" value="UniProtKB-UniRule"/>
</dbReference>
<dbReference type="GO" id="GO:0006189">
    <property type="term" value="P:'de novo' IMP biosynthetic process"/>
    <property type="evidence" value="ECO:0007669"/>
    <property type="project" value="UniProtKB-UniRule"/>
</dbReference>
<dbReference type="GO" id="GO:0046084">
    <property type="term" value="P:adenine biosynthetic process"/>
    <property type="evidence" value="ECO:0007669"/>
    <property type="project" value="TreeGrafter"/>
</dbReference>
<dbReference type="CDD" id="cd02196">
    <property type="entry name" value="PurM"/>
    <property type="match status" value="1"/>
</dbReference>
<dbReference type="FunFam" id="3.30.1330.10:FF:000001">
    <property type="entry name" value="Phosphoribosylformylglycinamidine cyclo-ligase"/>
    <property type="match status" value="1"/>
</dbReference>
<dbReference type="FunFam" id="3.90.650.10:FF:000019">
    <property type="entry name" value="Trifunctional purine biosynthetic protein adenosine-3"/>
    <property type="match status" value="1"/>
</dbReference>
<dbReference type="Gene3D" id="3.90.650.10">
    <property type="entry name" value="PurM-like C-terminal domain"/>
    <property type="match status" value="1"/>
</dbReference>
<dbReference type="Gene3D" id="3.30.1330.10">
    <property type="entry name" value="PurM-like, N-terminal domain"/>
    <property type="match status" value="1"/>
</dbReference>
<dbReference type="HAMAP" id="MF_00741">
    <property type="entry name" value="AIRS"/>
    <property type="match status" value="1"/>
</dbReference>
<dbReference type="InterPro" id="IPR010918">
    <property type="entry name" value="PurM-like_C_dom"/>
</dbReference>
<dbReference type="InterPro" id="IPR036676">
    <property type="entry name" value="PurM-like_C_sf"/>
</dbReference>
<dbReference type="InterPro" id="IPR016188">
    <property type="entry name" value="PurM-like_N"/>
</dbReference>
<dbReference type="InterPro" id="IPR036921">
    <property type="entry name" value="PurM-like_N_sf"/>
</dbReference>
<dbReference type="InterPro" id="IPR004733">
    <property type="entry name" value="PurM_cligase"/>
</dbReference>
<dbReference type="NCBIfam" id="TIGR00878">
    <property type="entry name" value="purM"/>
    <property type="match status" value="1"/>
</dbReference>
<dbReference type="PANTHER" id="PTHR10520:SF12">
    <property type="entry name" value="TRIFUNCTIONAL PURINE BIOSYNTHETIC PROTEIN ADENOSINE-3"/>
    <property type="match status" value="1"/>
</dbReference>
<dbReference type="PANTHER" id="PTHR10520">
    <property type="entry name" value="TRIFUNCTIONAL PURINE BIOSYNTHETIC PROTEIN ADENOSINE-3-RELATED"/>
    <property type="match status" value="1"/>
</dbReference>
<dbReference type="Pfam" id="PF00586">
    <property type="entry name" value="AIRS"/>
    <property type="match status" value="1"/>
</dbReference>
<dbReference type="Pfam" id="PF02769">
    <property type="entry name" value="AIRS_C"/>
    <property type="match status" value="1"/>
</dbReference>
<dbReference type="SUPFAM" id="SSF56042">
    <property type="entry name" value="PurM C-terminal domain-like"/>
    <property type="match status" value="1"/>
</dbReference>
<dbReference type="SUPFAM" id="SSF55326">
    <property type="entry name" value="PurM N-terminal domain-like"/>
    <property type="match status" value="1"/>
</dbReference>
<keyword id="KW-0067">ATP-binding</keyword>
<keyword id="KW-0963">Cytoplasm</keyword>
<keyword id="KW-0436">Ligase</keyword>
<keyword id="KW-0547">Nucleotide-binding</keyword>
<keyword id="KW-0658">Purine biosynthesis</keyword>
<keyword id="KW-1185">Reference proteome</keyword>
<proteinExistence type="inferred from homology"/>
<accession>Q2KA45</accession>
<name>PUR5_RHIEC</name>
<gene>
    <name evidence="1" type="primary">purM</name>
    <name type="ordered locus">RHE_CH01488</name>
</gene>
<protein>
    <recommendedName>
        <fullName evidence="1">Phosphoribosylformylglycinamidine cyclo-ligase</fullName>
        <ecNumber evidence="1">6.3.3.1</ecNumber>
    </recommendedName>
    <alternativeName>
        <fullName evidence="1">AIR synthase</fullName>
    </alternativeName>
    <alternativeName>
        <fullName evidence="1">AIRS</fullName>
    </alternativeName>
    <alternativeName>
        <fullName evidence="1">Phosphoribosyl-aminoimidazole synthetase</fullName>
    </alternativeName>
</protein>